<reference key="1">
    <citation type="submission" date="1999-04" db="EMBL/GenBank/DDBJ databases">
        <title>Structural analysis of Arabidopsis thaliana chromosome 5. XI.</title>
        <authorList>
            <person name="Kaneko T."/>
            <person name="Katoh T."/>
            <person name="Asamizu E."/>
            <person name="Sato S."/>
            <person name="Nakamura Y."/>
            <person name="Kotani H."/>
            <person name="Tabata S."/>
        </authorList>
    </citation>
    <scope>NUCLEOTIDE SEQUENCE [LARGE SCALE GENOMIC DNA]</scope>
    <source>
        <strain>cv. Columbia</strain>
    </source>
</reference>
<reference key="2">
    <citation type="journal article" date="2017" name="Plant J.">
        <title>Araport11: a complete reannotation of the Arabidopsis thaliana reference genome.</title>
        <authorList>
            <person name="Cheng C.Y."/>
            <person name="Krishnakumar V."/>
            <person name="Chan A.P."/>
            <person name="Thibaud-Nissen F."/>
            <person name="Schobel S."/>
            <person name="Town C.D."/>
        </authorList>
    </citation>
    <scope>GENOME REANNOTATION</scope>
    <source>
        <strain>cv. Columbia</strain>
    </source>
</reference>
<reference key="3">
    <citation type="journal article" date="2003" name="Science">
        <title>Empirical analysis of transcriptional activity in the Arabidopsis genome.</title>
        <authorList>
            <person name="Yamada K."/>
            <person name="Lim J."/>
            <person name="Dale J.M."/>
            <person name="Chen H."/>
            <person name="Shinn P."/>
            <person name="Palm C.J."/>
            <person name="Southwick A.M."/>
            <person name="Wu H.C."/>
            <person name="Kim C.J."/>
            <person name="Nguyen M."/>
            <person name="Pham P.K."/>
            <person name="Cheuk R.F."/>
            <person name="Karlin-Newmann G."/>
            <person name="Liu S.X."/>
            <person name="Lam B."/>
            <person name="Sakano H."/>
            <person name="Wu T."/>
            <person name="Yu G."/>
            <person name="Miranda M."/>
            <person name="Quach H.L."/>
            <person name="Tripp M."/>
            <person name="Chang C.H."/>
            <person name="Lee J.M."/>
            <person name="Toriumi M.J."/>
            <person name="Chan M.M."/>
            <person name="Tang C.C."/>
            <person name="Onodera C.S."/>
            <person name="Deng J.M."/>
            <person name="Akiyama K."/>
            <person name="Ansari Y."/>
            <person name="Arakawa T."/>
            <person name="Banh J."/>
            <person name="Banno F."/>
            <person name="Bowser L."/>
            <person name="Brooks S.Y."/>
            <person name="Carninci P."/>
            <person name="Chao Q."/>
            <person name="Choy N."/>
            <person name="Enju A."/>
            <person name="Goldsmith A.D."/>
            <person name="Gurjal M."/>
            <person name="Hansen N.F."/>
            <person name="Hayashizaki Y."/>
            <person name="Johnson-Hopson C."/>
            <person name="Hsuan V.W."/>
            <person name="Iida K."/>
            <person name="Karnes M."/>
            <person name="Khan S."/>
            <person name="Koesema E."/>
            <person name="Ishida J."/>
            <person name="Jiang P.X."/>
            <person name="Jones T."/>
            <person name="Kawai J."/>
            <person name="Kamiya A."/>
            <person name="Meyers C."/>
            <person name="Nakajima M."/>
            <person name="Narusaka M."/>
            <person name="Seki M."/>
            <person name="Sakurai T."/>
            <person name="Satou M."/>
            <person name="Tamse R."/>
            <person name="Vaysberg M."/>
            <person name="Wallender E.K."/>
            <person name="Wong C."/>
            <person name="Yamamura Y."/>
            <person name="Yuan S."/>
            <person name="Shinozaki K."/>
            <person name="Davis R.W."/>
            <person name="Theologis A."/>
            <person name="Ecker J.R."/>
        </authorList>
    </citation>
    <scope>NUCLEOTIDE SEQUENCE [LARGE SCALE MRNA]</scope>
    <source>
        <strain>cv. Columbia</strain>
    </source>
</reference>
<reference key="4">
    <citation type="journal article" date="2009" name="DNA Res.">
        <title>Analysis of multiple occurrences of alternative splicing events in Arabidopsis thaliana using novel sequenced full-length cDNAs.</title>
        <authorList>
            <person name="Iida K."/>
            <person name="Fukami-Kobayashi K."/>
            <person name="Toyoda A."/>
            <person name="Sakaki Y."/>
            <person name="Kobayashi M."/>
            <person name="Seki M."/>
            <person name="Shinozaki K."/>
        </authorList>
    </citation>
    <scope>NUCLEOTIDE SEQUENCE [LARGE SCALE MRNA]</scope>
    <source>
        <strain>cv. Columbia</strain>
    </source>
</reference>
<proteinExistence type="evidence at transcript level"/>
<organism evidence="5">
    <name type="scientific">Arabidopsis thaliana</name>
    <name type="common">Mouse-ear cress</name>
    <dbReference type="NCBI Taxonomy" id="3702"/>
    <lineage>
        <taxon>Eukaryota</taxon>
        <taxon>Viridiplantae</taxon>
        <taxon>Streptophyta</taxon>
        <taxon>Embryophyta</taxon>
        <taxon>Tracheophyta</taxon>
        <taxon>Spermatophyta</taxon>
        <taxon>Magnoliopsida</taxon>
        <taxon>eudicotyledons</taxon>
        <taxon>Gunneridae</taxon>
        <taxon>Pentapetalae</taxon>
        <taxon>rosids</taxon>
        <taxon>malvids</taxon>
        <taxon>Brassicales</taxon>
        <taxon>Brassicaceae</taxon>
        <taxon>Camelineae</taxon>
        <taxon>Arabidopsis</taxon>
    </lineage>
</organism>
<name>PGML1_ARATH</name>
<dbReference type="EMBL" id="AB025640">
    <property type="protein sequence ID" value="BAB11607.1"/>
    <property type="molecule type" value="Genomic_DNA"/>
</dbReference>
<dbReference type="EMBL" id="CP002688">
    <property type="protein sequence ID" value="AED97895.1"/>
    <property type="molecule type" value="Genomic_DNA"/>
</dbReference>
<dbReference type="EMBL" id="CP002688">
    <property type="protein sequence ID" value="AED97896.1"/>
    <property type="molecule type" value="Genomic_DNA"/>
</dbReference>
<dbReference type="EMBL" id="CP002688">
    <property type="protein sequence ID" value="AED97897.1"/>
    <property type="molecule type" value="Genomic_DNA"/>
</dbReference>
<dbReference type="EMBL" id="CP002688">
    <property type="protein sequence ID" value="AED97898.1"/>
    <property type="molecule type" value="Genomic_DNA"/>
</dbReference>
<dbReference type="EMBL" id="CP002688">
    <property type="protein sequence ID" value="AED97900.1"/>
    <property type="molecule type" value="Genomic_DNA"/>
</dbReference>
<dbReference type="EMBL" id="CP002688">
    <property type="protein sequence ID" value="AED97902.1"/>
    <property type="molecule type" value="Genomic_DNA"/>
</dbReference>
<dbReference type="EMBL" id="CP002688">
    <property type="protein sequence ID" value="ANM70033.1"/>
    <property type="molecule type" value="Genomic_DNA"/>
</dbReference>
<dbReference type="EMBL" id="BT000924">
    <property type="protein sequence ID" value="AAN41324.1"/>
    <property type="molecule type" value="mRNA"/>
</dbReference>
<dbReference type="EMBL" id="AK317225">
    <property type="protein sequence ID" value="BAH19906.1"/>
    <property type="molecule type" value="mRNA"/>
</dbReference>
<dbReference type="RefSeq" id="NP_001032138.1">
    <molecule id="Q9FGF0-1"/>
    <property type="nucleotide sequence ID" value="NM_001037061.3"/>
</dbReference>
<dbReference type="RefSeq" id="NP_001032139.1">
    <molecule id="Q9FGF0-1"/>
    <property type="nucleotide sequence ID" value="NM_001037062.1"/>
</dbReference>
<dbReference type="RefSeq" id="NP_001078794.1">
    <molecule id="Q9FGF0-1"/>
    <property type="nucleotide sequence ID" value="NM_001085325.1"/>
</dbReference>
<dbReference type="RefSeq" id="NP_001190613.1">
    <molecule id="Q9FGF0-1"/>
    <property type="nucleotide sequence ID" value="NM_001203684.1"/>
</dbReference>
<dbReference type="RefSeq" id="NP_001331672.1">
    <molecule id="Q9FGF0-1"/>
    <property type="nucleotide sequence ID" value="NM_001345628.1"/>
</dbReference>
<dbReference type="RefSeq" id="NP_201251.1">
    <molecule id="Q9FGF0-1"/>
    <property type="nucleotide sequence ID" value="NM_125842.4"/>
</dbReference>
<dbReference type="RefSeq" id="NP_851266.1">
    <molecule id="Q9FGF0-1"/>
    <property type="nucleotide sequence ID" value="NM_180935.2"/>
</dbReference>
<dbReference type="SMR" id="Q9FGF0"/>
<dbReference type="FunCoup" id="Q9FGF0">
    <property type="interactions" value="1415"/>
</dbReference>
<dbReference type="STRING" id="3702.Q9FGF0"/>
<dbReference type="iPTMnet" id="Q9FGF0"/>
<dbReference type="PaxDb" id="3702-AT5G64460.8"/>
<dbReference type="ProteomicsDB" id="236674">
    <molecule id="Q9FGF0-1"/>
</dbReference>
<dbReference type="DNASU" id="836567"/>
<dbReference type="EnsemblPlants" id="AT5G64460.1">
    <molecule id="Q9FGF0-1"/>
    <property type="protein sequence ID" value="AT5G64460.1"/>
    <property type="gene ID" value="AT5G64460"/>
</dbReference>
<dbReference type="EnsemblPlants" id="AT5G64460.10">
    <molecule id="Q9FGF0-1"/>
    <property type="protein sequence ID" value="AT5G64460.10"/>
    <property type="gene ID" value="AT5G64460"/>
</dbReference>
<dbReference type="EnsemblPlants" id="AT5G64460.2">
    <molecule id="Q9FGF0-1"/>
    <property type="protein sequence ID" value="AT5G64460.2"/>
    <property type="gene ID" value="AT5G64460"/>
</dbReference>
<dbReference type="EnsemblPlants" id="AT5G64460.3">
    <molecule id="Q9FGF0-1"/>
    <property type="protein sequence ID" value="AT5G64460.3"/>
    <property type="gene ID" value="AT5G64460"/>
</dbReference>
<dbReference type="EnsemblPlants" id="AT5G64460.4">
    <molecule id="Q9FGF0-1"/>
    <property type="protein sequence ID" value="AT5G64460.4"/>
    <property type="gene ID" value="AT5G64460"/>
</dbReference>
<dbReference type="EnsemblPlants" id="AT5G64460.6">
    <molecule id="Q9FGF0-1"/>
    <property type="protein sequence ID" value="AT5G64460.6"/>
    <property type="gene ID" value="AT5G64460"/>
</dbReference>
<dbReference type="EnsemblPlants" id="AT5G64460.8">
    <molecule id="Q9FGF0-1"/>
    <property type="protein sequence ID" value="AT5G64460.8"/>
    <property type="gene ID" value="AT5G64460"/>
</dbReference>
<dbReference type="GeneID" id="836567"/>
<dbReference type="Gramene" id="AT5G64460.1">
    <molecule id="Q9FGF0-1"/>
    <property type="protein sequence ID" value="AT5G64460.1"/>
    <property type="gene ID" value="AT5G64460"/>
</dbReference>
<dbReference type="Gramene" id="AT5G64460.10">
    <molecule id="Q9FGF0-1"/>
    <property type="protein sequence ID" value="AT5G64460.10"/>
    <property type="gene ID" value="AT5G64460"/>
</dbReference>
<dbReference type="Gramene" id="AT5G64460.2">
    <molecule id="Q9FGF0-1"/>
    <property type="protein sequence ID" value="AT5G64460.2"/>
    <property type="gene ID" value="AT5G64460"/>
</dbReference>
<dbReference type="Gramene" id="AT5G64460.3">
    <molecule id="Q9FGF0-1"/>
    <property type="protein sequence ID" value="AT5G64460.3"/>
    <property type="gene ID" value="AT5G64460"/>
</dbReference>
<dbReference type="Gramene" id="AT5G64460.4">
    <molecule id="Q9FGF0-1"/>
    <property type="protein sequence ID" value="AT5G64460.4"/>
    <property type="gene ID" value="AT5G64460"/>
</dbReference>
<dbReference type="Gramene" id="AT5G64460.6">
    <molecule id="Q9FGF0-1"/>
    <property type="protein sequence ID" value="AT5G64460.6"/>
    <property type="gene ID" value="AT5G64460"/>
</dbReference>
<dbReference type="Gramene" id="AT5G64460.8">
    <molecule id="Q9FGF0-1"/>
    <property type="protein sequence ID" value="AT5G64460.8"/>
    <property type="gene ID" value="AT5G64460"/>
</dbReference>
<dbReference type="KEGG" id="ath:AT5G64460"/>
<dbReference type="Araport" id="AT5G64460"/>
<dbReference type="TAIR" id="AT5G64460"/>
<dbReference type="eggNOG" id="KOG4754">
    <property type="taxonomic scope" value="Eukaryota"/>
</dbReference>
<dbReference type="HOGENOM" id="CLU_039184_4_0_1"/>
<dbReference type="InParanoid" id="Q9FGF0"/>
<dbReference type="OMA" id="NCECRPL"/>
<dbReference type="OrthoDB" id="496981at2759"/>
<dbReference type="PhylomeDB" id="Q9FGF0"/>
<dbReference type="CD-CODE" id="4299E36E">
    <property type="entry name" value="Nucleolus"/>
</dbReference>
<dbReference type="PRO" id="PR:Q9FGF0"/>
<dbReference type="Proteomes" id="UP000006548">
    <property type="component" value="Chromosome 5"/>
</dbReference>
<dbReference type="ExpressionAtlas" id="Q9FGF0">
    <property type="expression patterns" value="baseline and differential"/>
</dbReference>
<dbReference type="GO" id="GO:0005829">
    <property type="term" value="C:cytosol"/>
    <property type="evidence" value="ECO:0007005"/>
    <property type="project" value="TAIR"/>
</dbReference>
<dbReference type="GO" id="GO:0009536">
    <property type="term" value="C:plastid"/>
    <property type="evidence" value="ECO:0007005"/>
    <property type="project" value="TAIR"/>
</dbReference>
<dbReference type="CDD" id="cd07067">
    <property type="entry name" value="HP_PGM_like"/>
    <property type="match status" value="1"/>
</dbReference>
<dbReference type="FunFam" id="3.40.50.1240:FF:000066">
    <property type="entry name" value="Phosphoglycerate mutase-like protein 1"/>
    <property type="match status" value="1"/>
</dbReference>
<dbReference type="Gene3D" id="3.40.50.1240">
    <property type="entry name" value="Phosphoglycerate mutase-like"/>
    <property type="match status" value="1"/>
</dbReference>
<dbReference type="InterPro" id="IPR013078">
    <property type="entry name" value="His_Pase_superF_clade-1"/>
</dbReference>
<dbReference type="InterPro" id="IPR029033">
    <property type="entry name" value="His_PPase_superfam"/>
</dbReference>
<dbReference type="InterPro" id="IPR050275">
    <property type="entry name" value="PGM_Phosphatase"/>
</dbReference>
<dbReference type="PANTHER" id="PTHR48100">
    <property type="entry name" value="BROAD-SPECIFICITY PHOSPHATASE YOR283W-RELATED"/>
    <property type="match status" value="1"/>
</dbReference>
<dbReference type="PANTHER" id="PTHR48100:SF30">
    <property type="entry name" value="PHOSPHOGLYCERATE MUTASE-LIKE PROTEIN 1"/>
    <property type="match status" value="1"/>
</dbReference>
<dbReference type="Pfam" id="PF00300">
    <property type="entry name" value="His_Phos_1"/>
    <property type="match status" value="1"/>
</dbReference>
<dbReference type="SMART" id="SM00855">
    <property type="entry name" value="PGAM"/>
    <property type="match status" value="1"/>
</dbReference>
<dbReference type="SUPFAM" id="SSF53254">
    <property type="entry name" value="Phosphoglycerate mutase-like"/>
    <property type="match status" value="1"/>
</dbReference>
<evidence type="ECO:0000250" key="1">
    <source>
        <dbReference type="UniProtKB" id="P62707"/>
    </source>
</evidence>
<evidence type="ECO:0000250" key="2">
    <source>
        <dbReference type="UniProtKB" id="Q9MAA2"/>
    </source>
</evidence>
<evidence type="ECO:0000305" key="3"/>
<evidence type="ECO:0000312" key="4">
    <source>
        <dbReference type="Araport" id="AT5G64460"/>
    </source>
</evidence>
<evidence type="ECO:0000312" key="5">
    <source>
        <dbReference type="EMBL" id="BAB11607.1"/>
    </source>
</evidence>
<gene>
    <name evidence="4" type="ordered locus">At5g64460</name>
    <name evidence="5" type="ORF">T12B11.5</name>
</gene>
<comment type="function">
    <text evidence="2">May play a role in carbohydrates metabolism.</text>
</comment>
<comment type="alternative products">
    <event type="alternative splicing"/>
    <isoform>
        <id>Q9FGF0-1</id>
        <name>1</name>
        <sequence type="displayed"/>
    </isoform>
    <text>A number of isoforms are produced. According to EST sequences.</text>
</comment>
<comment type="similarity">
    <text evidence="3">Belongs to the phosphoglycerate mutase family.</text>
</comment>
<accession>Q9FGF0</accession>
<protein>
    <recommendedName>
        <fullName evidence="3">Phosphoglycerate mutase-like protein 1</fullName>
    </recommendedName>
</protein>
<sequence>METGAGIGLYPLHRCKTIYLVRHAQGIHNVDGEKNYKAYMSHDYFDAELTQLGWKQVDSLRKHVHSSGLHKKIELVISSPLMRTLQTAVGVFGGEGYTDMSDVLPLMVANAGNSSRAAISSLNCPPVITEESCREHLGVHPCDQRRSISDYQFLFPAVDFSLIESEEDKLWKADVRETIEELAARGKKFLNWLWTRKEKEIAIVTHSGFLFHTLNALQNECHPDVKKEICGHFANCELRSMVIVDRSMLGSDSSVTDYPGKIPKGIDLPSDAVVDDNNIKVE</sequence>
<keyword id="KW-0025">Alternative splicing</keyword>
<keyword id="KW-1185">Reference proteome</keyword>
<feature type="chain" id="PRO_0000430632" description="Phosphoglycerate mutase-like protein 1">
    <location>
        <begin position="1"/>
        <end position="282"/>
    </location>
</feature>
<feature type="active site" description="Tele-phosphohistidine intermediate" evidence="1">
    <location>
        <position position="23"/>
    </location>
</feature>
<feature type="active site" description="Proton donor/acceptor" evidence="1">
    <location>
        <position position="135"/>
    </location>
</feature>
<feature type="site" description="Transition state stabilizer" evidence="1">
    <location>
        <position position="206"/>
    </location>
</feature>